<gene>
    <name type="primary">MT1L</name>
</gene>
<reference key="1">
    <citation type="journal article" date="1996" name="FEBS Lett.">
        <title>Cloning and sequencing a novel metallothionein I isoform expressed in human reticulocytes.</title>
        <authorList>
            <person name="Lambert E."/>
            <person name="Kille P."/>
            <person name="Swaminathan R."/>
        </authorList>
    </citation>
    <scope>NUCLEOTIDE SEQUENCE [MRNA]</scope>
    <source>
        <tissue>Reticulocyte</tissue>
    </source>
</reference>
<sequence>MDPNCSCATGGSCSCASSCKCKECKCTSCKKSCCSCCPMGCAKCAQGCVCKGASEKCSCCA</sequence>
<proteinExistence type="evidence at protein level"/>
<feature type="chain" id="PRO_0000197242" description="Metallothionein-1L">
    <location>
        <begin position="1"/>
        <end position="61"/>
    </location>
</feature>
<feature type="region of interest" description="Beta">
    <location>
        <begin position="1"/>
        <end position="29"/>
    </location>
</feature>
<feature type="region of interest" description="Alpha">
    <location>
        <begin position="30"/>
        <end position="61"/>
    </location>
</feature>
<feature type="binding site" evidence="2">
    <location>
        <position position="5"/>
    </location>
    <ligand>
        <name>a divalent metal cation</name>
        <dbReference type="ChEBI" id="CHEBI:60240"/>
        <label>1</label>
        <note>in cluster B</note>
    </ligand>
</feature>
<feature type="binding site" evidence="2">
    <location>
        <position position="7"/>
    </location>
    <ligand>
        <name>a divalent metal cation</name>
        <dbReference type="ChEBI" id="CHEBI:60240"/>
        <label>1</label>
        <note>in cluster B</note>
    </ligand>
</feature>
<feature type="binding site" evidence="2">
    <location>
        <position position="7"/>
    </location>
    <ligand>
        <name>a divalent metal cation</name>
        <dbReference type="ChEBI" id="CHEBI:60240"/>
        <label>2</label>
        <note>in cluster B</note>
    </ligand>
</feature>
<feature type="binding site" evidence="2">
    <location>
        <position position="13"/>
    </location>
    <ligand>
        <name>a divalent metal cation</name>
        <dbReference type="ChEBI" id="CHEBI:60240"/>
        <label>2</label>
        <note>in cluster B</note>
    </ligand>
</feature>
<feature type="binding site" evidence="2">
    <location>
        <position position="15"/>
    </location>
    <ligand>
        <name>a divalent metal cation</name>
        <dbReference type="ChEBI" id="CHEBI:60240"/>
        <label>2</label>
        <note>in cluster B</note>
    </ligand>
</feature>
<feature type="binding site" evidence="2">
    <location>
        <position position="15"/>
    </location>
    <ligand>
        <name>a divalent metal cation</name>
        <dbReference type="ChEBI" id="CHEBI:60240"/>
        <label>3</label>
        <note>in cluster B</note>
    </ligand>
</feature>
<feature type="binding site" evidence="2">
    <location>
        <position position="19"/>
    </location>
    <ligand>
        <name>a divalent metal cation</name>
        <dbReference type="ChEBI" id="CHEBI:60240"/>
        <label>3</label>
        <note>in cluster B</note>
    </ligand>
</feature>
<feature type="binding site" evidence="2">
    <location>
        <position position="21"/>
    </location>
    <ligand>
        <name>a divalent metal cation</name>
        <dbReference type="ChEBI" id="CHEBI:60240"/>
        <label>1</label>
        <note>in cluster B</note>
    </ligand>
</feature>
<feature type="binding site" evidence="2">
    <location>
        <position position="24"/>
    </location>
    <ligand>
        <name>a divalent metal cation</name>
        <dbReference type="ChEBI" id="CHEBI:60240"/>
        <label>1</label>
        <note>in cluster B</note>
    </ligand>
</feature>
<feature type="binding site" evidence="2">
    <location>
        <position position="24"/>
    </location>
    <ligand>
        <name>a divalent metal cation</name>
        <dbReference type="ChEBI" id="CHEBI:60240"/>
        <label>3</label>
        <note>in cluster B</note>
    </ligand>
</feature>
<feature type="binding site" evidence="2">
    <location>
        <position position="26"/>
    </location>
    <ligand>
        <name>a divalent metal cation</name>
        <dbReference type="ChEBI" id="CHEBI:60240"/>
        <label>2</label>
        <note>in cluster B</note>
    </ligand>
</feature>
<feature type="binding site" evidence="2">
    <location>
        <position position="29"/>
    </location>
    <ligand>
        <name>a divalent metal cation</name>
        <dbReference type="ChEBI" id="CHEBI:60240"/>
        <label>3</label>
        <note>in cluster B</note>
    </ligand>
</feature>
<feature type="binding site" evidence="2">
    <location>
        <position position="33"/>
    </location>
    <ligand>
        <name>a divalent metal cation</name>
        <dbReference type="ChEBI" id="CHEBI:60240"/>
        <label>4</label>
        <note>in cluster A</note>
    </ligand>
</feature>
<feature type="binding site" evidence="2">
    <location>
        <position position="34"/>
    </location>
    <ligand>
        <name>a divalent metal cation</name>
        <dbReference type="ChEBI" id="CHEBI:60240"/>
        <label>4</label>
        <note>in cluster A</note>
    </ligand>
</feature>
<feature type="binding site" evidence="2">
    <location>
        <position position="34"/>
    </location>
    <ligand>
        <name>a divalent metal cation</name>
        <dbReference type="ChEBI" id="CHEBI:60240"/>
        <label>5</label>
        <note>in cluster A</note>
    </ligand>
</feature>
<feature type="binding site" evidence="2">
    <location>
        <position position="36"/>
    </location>
    <ligand>
        <name>a divalent metal cation</name>
        <dbReference type="ChEBI" id="CHEBI:60240"/>
        <label>5</label>
        <note>in cluster A</note>
    </ligand>
</feature>
<feature type="binding site" evidence="2">
    <location>
        <position position="37"/>
    </location>
    <ligand>
        <name>a divalent metal cation</name>
        <dbReference type="ChEBI" id="CHEBI:60240"/>
        <label>5</label>
        <note>in cluster A</note>
    </ligand>
</feature>
<feature type="binding site" evidence="2">
    <location>
        <position position="37"/>
    </location>
    <ligand>
        <name>a divalent metal cation</name>
        <dbReference type="ChEBI" id="CHEBI:60240"/>
        <label>6</label>
        <note>in cluster A</note>
    </ligand>
</feature>
<feature type="binding site" evidence="2">
    <location>
        <position position="41"/>
    </location>
    <ligand>
        <name>a divalent metal cation</name>
        <dbReference type="ChEBI" id="CHEBI:60240"/>
        <label>6</label>
        <note>in cluster A</note>
    </ligand>
</feature>
<feature type="binding site" evidence="2">
    <location>
        <position position="44"/>
    </location>
    <ligand>
        <name>a divalent metal cation</name>
        <dbReference type="ChEBI" id="CHEBI:60240"/>
        <label>4</label>
        <note>in cluster A</note>
    </ligand>
</feature>
<feature type="binding site" evidence="2">
    <location>
        <position position="44"/>
    </location>
    <ligand>
        <name>a divalent metal cation</name>
        <dbReference type="ChEBI" id="CHEBI:60240"/>
        <label>6</label>
        <note>in cluster A</note>
    </ligand>
</feature>
<feature type="binding site" evidence="2">
    <location>
        <position position="48"/>
    </location>
    <ligand>
        <name>a divalent metal cation</name>
        <dbReference type="ChEBI" id="CHEBI:60240"/>
        <label>4</label>
        <note>in cluster A</note>
    </ligand>
</feature>
<feature type="binding site" evidence="2">
    <location>
        <position position="50"/>
    </location>
    <ligand>
        <name>a divalent metal cation</name>
        <dbReference type="ChEBI" id="CHEBI:60240"/>
        <label>5</label>
        <note>in cluster A</note>
    </ligand>
</feature>
<feature type="binding site" evidence="2">
    <location>
        <position position="50"/>
    </location>
    <ligand>
        <name>a divalent metal cation</name>
        <dbReference type="ChEBI" id="CHEBI:60240"/>
        <label>7</label>
        <note>in cluster A</note>
    </ligand>
</feature>
<feature type="binding site" evidence="2">
    <location>
        <position position="57"/>
    </location>
    <ligand>
        <name>a divalent metal cation</name>
        <dbReference type="ChEBI" id="CHEBI:60240"/>
        <label>7</label>
        <note>in cluster A</note>
    </ligand>
</feature>
<feature type="binding site" evidence="2">
    <location>
        <position position="59"/>
    </location>
    <ligand>
        <name>a divalent metal cation</name>
        <dbReference type="ChEBI" id="CHEBI:60240"/>
        <label>7</label>
        <note>in cluster A</note>
    </ligand>
</feature>
<feature type="binding site" evidence="2">
    <location>
        <position position="60"/>
    </location>
    <ligand>
        <name>a divalent metal cation</name>
        <dbReference type="ChEBI" id="CHEBI:60240"/>
        <label>6</label>
        <note>in cluster A</note>
    </ligand>
</feature>
<feature type="binding site" evidence="2">
    <location>
        <position position="60"/>
    </location>
    <ligand>
        <name>a divalent metal cation</name>
        <dbReference type="ChEBI" id="CHEBI:60240"/>
        <label>7</label>
        <note>in cluster A</note>
    </ligand>
</feature>
<dbReference type="EMBL" id="X97261">
    <property type="protein sequence ID" value="CAA65916.1"/>
    <property type="molecule type" value="mRNA"/>
</dbReference>
<dbReference type="PIR" id="S69277">
    <property type="entry name" value="S69277"/>
</dbReference>
<dbReference type="SMR" id="Q93083"/>
<dbReference type="FunCoup" id="Q93083">
    <property type="interactions" value="24"/>
</dbReference>
<dbReference type="DrugBank" id="DB09130">
    <property type="generic name" value="Copper"/>
</dbReference>
<dbReference type="DrugBank" id="DB12965">
    <property type="generic name" value="Silver"/>
</dbReference>
<dbReference type="iPTMnet" id="Q93083"/>
<dbReference type="BioMuta" id="HGNC:7404"/>
<dbReference type="jPOST" id="Q93083"/>
<dbReference type="MassIVE" id="Q93083"/>
<dbReference type="PaxDb" id="9606-ENSP00000391397"/>
<dbReference type="ProteomicsDB" id="75707"/>
<dbReference type="TopDownProteomics" id="Q93083"/>
<dbReference type="AGR" id="HGNC:7404"/>
<dbReference type="GeneCards" id="MT1L"/>
<dbReference type="HGNC" id="HGNC:7404">
    <property type="gene designation" value="MT1L"/>
</dbReference>
<dbReference type="MIM" id="156358">
    <property type="type" value="gene"/>
</dbReference>
<dbReference type="neXtProt" id="NX_Q93083"/>
<dbReference type="InParanoid" id="Q93083"/>
<dbReference type="PAN-GO" id="Q93083">
    <property type="GO annotations" value="8 GO annotations based on evolutionary models"/>
</dbReference>
<dbReference type="PathwayCommons" id="Q93083"/>
<dbReference type="ChiTaRS" id="MT1L">
    <property type="organism name" value="human"/>
</dbReference>
<dbReference type="Pharos" id="Q93083">
    <property type="development level" value="Tbio"/>
</dbReference>
<dbReference type="PRO" id="PR:Q93083"/>
<dbReference type="Proteomes" id="UP000005640">
    <property type="component" value="Unplaced"/>
</dbReference>
<dbReference type="RNAct" id="Q93083">
    <property type="molecule type" value="protein"/>
</dbReference>
<dbReference type="GO" id="GO:0005737">
    <property type="term" value="C:cytoplasm"/>
    <property type="evidence" value="ECO:0000250"/>
    <property type="project" value="UniProtKB"/>
</dbReference>
<dbReference type="GO" id="GO:0005634">
    <property type="term" value="C:nucleus"/>
    <property type="evidence" value="ECO:0000250"/>
    <property type="project" value="UniProtKB"/>
</dbReference>
<dbReference type="GO" id="GO:0046872">
    <property type="term" value="F:metal ion binding"/>
    <property type="evidence" value="ECO:0000318"/>
    <property type="project" value="GO_Central"/>
</dbReference>
<dbReference type="GO" id="GO:0008270">
    <property type="term" value="F:zinc ion binding"/>
    <property type="evidence" value="ECO:0000250"/>
    <property type="project" value="UniProtKB"/>
</dbReference>
<dbReference type="GO" id="GO:0071276">
    <property type="term" value="P:cellular response to cadmium ion"/>
    <property type="evidence" value="ECO:0000318"/>
    <property type="project" value="GO_Central"/>
</dbReference>
<dbReference type="GO" id="GO:0071280">
    <property type="term" value="P:cellular response to copper ion"/>
    <property type="evidence" value="ECO:0000318"/>
    <property type="project" value="GO_Central"/>
</dbReference>
<dbReference type="GO" id="GO:0071294">
    <property type="term" value="P:cellular response to zinc ion"/>
    <property type="evidence" value="ECO:0000270"/>
    <property type="project" value="UniProtKB"/>
</dbReference>
<dbReference type="GO" id="GO:0010273">
    <property type="term" value="P:detoxification of copper ion"/>
    <property type="evidence" value="ECO:0000318"/>
    <property type="project" value="GO_Central"/>
</dbReference>
<dbReference type="GO" id="GO:0006882">
    <property type="term" value="P:intracellular zinc ion homeostasis"/>
    <property type="evidence" value="ECO:0000318"/>
    <property type="project" value="GO_Central"/>
</dbReference>
<dbReference type="GO" id="GO:0045926">
    <property type="term" value="P:negative regulation of growth"/>
    <property type="evidence" value="ECO:0000250"/>
    <property type="project" value="UniProtKB"/>
</dbReference>
<dbReference type="FunFam" id="4.10.10.10:FF:000001">
    <property type="entry name" value="Metallothionein"/>
    <property type="match status" value="1"/>
</dbReference>
<dbReference type="Gene3D" id="4.10.10.10">
    <property type="entry name" value="Metallothionein Isoform II"/>
    <property type="match status" value="1"/>
</dbReference>
<dbReference type="InterPro" id="IPR017854">
    <property type="entry name" value="Metalthion_dom_sf"/>
</dbReference>
<dbReference type="InterPro" id="IPR023587">
    <property type="entry name" value="Metalthion_dom_sf_vert"/>
</dbReference>
<dbReference type="InterPro" id="IPR000006">
    <property type="entry name" value="Metalthion_vert"/>
</dbReference>
<dbReference type="InterPro" id="IPR018064">
    <property type="entry name" value="Metalthion_vert_metal_BS"/>
</dbReference>
<dbReference type="PANTHER" id="PTHR23299">
    <property type="entry name" value="METALLOTHIONEIN"/>
    <property type="match status" value="1"/>
</dbReference>
<dbReference type="PANTHER" id="PTHR23299:SF48">
    <property type="entry name" value="METALLOTHIONEIN-1E-RELATED"/>
    <property type="match status" value="1"/>
</dbReference>
<dbReference type="Pfam" id="PF00131">
    <property type="entry name" value="Metallothio"/>
    <property type="match status" value="1"/>
</dbReference>
<dbReference type="PRINTS" id="PR00860">
    <property type="entry name" value="MTVERTEBRATE"/>
</dbReference>
<dbReference type="SUPFAM" id="SSF57868">
    <property type="entry name" value="Metallothionein"/>
    <property type="match status" value="1"/>
</dbReference>
<dbReference type="PROSITE" id="PS00203">
    <property type="entry name" value="METALLOTHIONEIN_VRT"/>
    <property type="match status" value="1"/>
</dbReference>
<protein>
    <recommendedName>
        <fullName>Metallothionein-1L</fullName>
        <shortName>MT-1L</shortName>
    </recommendedName>
    <alternativeName>
        <fullName>Metallothionein-IL</fullName>
        <shortName>MT-IL</shortName>
    </alternativeName>
</protein>
<evidence type="ECO:0000250" key="1"/>
<evidence type="ECO:0000250" key="2">
    <source>
        <dbReference type="UniProtKB" id="P02795"/>
    </source>
</evidence>
<evidence type="ECO:0000305" key="3"/>
<comment type="function">
    <text evidence="1">Metallothioneins have a high content of cysteine residues that bind various heavy metals; these proteins are transcriptionally regulated by both heavy metals and glucocorticoids.</text>
</comment>
<comment type="subunit">
    <text evidence="1">Monomer.</text>
</comment>
<comment type="tissue specificity">
    <text>Expressed in reticulocytes.</text>
</comment>
<comment type="domain">
    <text>Class I metallothioneins contain 2 metal-binding domains: four divalent ions are chelated within cluster A of the alpha domain and are coordinated via cysteinyl thiolate bridges to 11 cysteine ligands. Cluster B, the corresponding region within the beta domain, can ligate three divalent ions to 9 cysteines.</text>
</comment>
<comment type="similarity">
    <text evidence="3">Belongs to the metallothionein superfamily. Type 1 family.</text>
</comment>
<name>MT1L_HUMAN</name>
<accession>Q93083</accession>
<keyword id="KW-0104">Cadmium</keyword>
<keyword id="KW-0186">Copper</keyword>
<keyword id="KW-0479">Metal-binding</keyword>
<keyword id="KW-0480">Metal-thiolate cluster</keyword>
<keyword id="KW-1267">Proteomics identification</keyword>
<keyword id="KW-1185">Reference proteome</keyword>
<keyword id="KW-0862">Zinc</keyword>
<organism>
    <name type="scientific">Homo sapiens</name>
    <name type="common">Human</name>
    <dbReference type="NCBI Taxonomy" id="9606"/>
    <lineage>
        <taxon>Eukaryota</taxon>
        <taxon>Metazoa</taxon>
        <taxon>Chordata</taxon>
        <taxon>Craniata</taxon>
        <taxon>Vertebrata</taxon>
        <taxon>Euteleostomi</taxon>
        <taxon>Mammalia</taxon>
        <taxon>Eutheria</taxon>
        <taxon>Euarchontoglires</taxon>
        <taxon>Primates</taxon>
        <taxon>Haplorrhini</taxon>
        <taxon>Catarrhini</taxon>
        <taxon>Hominidae</taxon>
        <taxon>Homo</taxon>
    </lineage>
</organism>